<evidence type="ECO:0000255" key="1">
    <source>
        <dbReference type="HAMAP-Rule" id="MF_00178"/>
    </source>
</evidence>
<name>RISB_SHESH</name>
<organism>
    <name type="scientific">Shewanella sediminis (strain HAW-EB3)</name>
    <dbReference type="NCBI Taxonomy" id="425104"/>
    <lineage>
        <taxon>Bacteria</taxon>
        <taxon>Pseudomonadati</taxon>
        <taxon>Pseudomonadota</taxon>
        <taxon>Gammaproteobacteria</taxon>
        <taxon>Alteromonadales</taxon>
        <taxon>Shewanellaceae</taxon>
        <taxon>Shewanella</taxon>
    </lineage>
</organism>
<proteinExistence type="inferred from homology"/>
<keyword id="KW-1185">Reference proteome</keyword>
<keyword id="KW-0686">Riboflavin biosynthesis</keyword>
<keyword id="KW-0808">Transferase</keyword>
<protein>
    <recommendedName>
        <fullName evidence="1">6,7-dimethyl-8-ribityllumazine synthase</fullName>
        <shortName evidence="1">DMRL synthase</shortName>
        <shortName evidence="1">LS</shortName>
        <shortName evidence="1">Lumazine synthase</shortName>
        <ecNumber evidence="1">2.5.1.78</ecNumber>
    </recommendedName>
</protein>
<comment type="function">
    <text evidence="1">Catalyzes the formation of 6,7-dimethyl-8-ribityllumazine by condensation of 5-amino-6-(D-ribitylamino)uracil with 3,4-dihydroxy-2-butanone 4-phosphate. This is the penultimate step in the biosynthesis of riboflavin.</text>
</comment>
<comment type="catalytic activity">
    <reaction evidence="1">
        <text>(2S)-2-hydroxy-3-oxobutyl phosphate + 5-amino-6-(D-ribitylamino)uracil = 6,7-dimethyl-8-(1-D-ribityl)lumazine + phosphate + 2 H2O + H(+)</text>
        <dbReference type="Rhea" id="RHEA:26152"/>
        <dbReference type="ChEBI" id="CHEBI:15377"/>
        <dbReference type="ChEBI" id="CHEBI:15378"/>
        <dbReference type="ChEBI" id="CHEBI:15934"/>
        <dbReference type="ChEBI" id="CHEBI:43474"/>
        <dbReference type="ChEBI" id="CHEBI:58201"/>
        <dbReference type="ChEBI" id="CHEBI:58830"/>
        <dbReference type="EC" id="2.5.1.78"/>
    </reaction>
</comment>
<comment type="pathway">
    <text evidence="1">Cofactor biosynthesis; riboflavin biosynthesis; riboflavin from 2-hydroxy-3-oxobutyl phosphate and 5-amino-6-(D-ribitylamino)uracil: step 1/2.</text>
</comment>
<comment type="subunit">
    <text evidence="1">Forms an icosahedral capsid composed of 60 subunits, arranged as a dodecamer of pentamers.</text>
</comment>
<comment type="similarity">
    <text evidence="1">Belongs to the DMRL synthase family.</text>
</comment>
<feature type="chain" id="PRO_1000077250" description="6,7-dimethyl-8-ribityllumazine synthase">
    <location>
        <begin position="1"/>
        <end position="160"/>
    </location>
</feature>
<feature type="active site" description="Proton donor" evidence="1">
    <location>
        <position position="89"/>
    </location>
</feature>
<feature type="binding site" evidence="1">
    <location>
        <position position="22"/>
    </location>
    <ligand>
        <name>5-amino-6-(D-ribitylamino)uracil</name>
        <dbReference type="ChEBI" id="CHEBI:15934"/>
    </ligand>
</feature>
<feature type="binding site" evidence="1">
    <location>
        <begin position="57"/>
        <end position="59"/>
    </location>
    <ligand>
        <name>5-amino-6-(D-ribitylamino)uracil</name>
        <dbReference type="ChEBI" id="CHEBI:15934"/>
    </ligand>
</feature>
<feature type="binding site" evidence="1">
    <location>
        <begin position="81"/>
        <end position="83"/>
    </location>
    <ligand>
        <name>5-amino-6-(D-ribitylamino)uracil</name>
        <dbReference type="ChEBI" id="CHEBI:15934"/>
    </ligand>
</feature>
<feature type="binding site" evidence="1">
    <location>
        <begin position="86"/>
        <end position="87"/>
    </location>
    <ligand>
        <name>(2S)-2-hydroxy-3-oxobutyl phosphate</name>
        <dbReference type="ChEBI" id="CHEBI:58830"/>
    </ligand>
</feature>
<feature type="binding site" evidence="1">
    <location>
        <position position="114"/>
    </location>
    <ligand>
        <name>5-amino-6-(D-ribitylamino)uracil</name>
        <dbReference type="ChEBI" id="CHEBI:15934"/>
    </ligand>
</feature>
<feature type="binding site" evidence="1">
    <location>
        <position position="128"/>
    </location>
    <ligand>
        <name>(2S)-2-hydroxy-3-oxobutyl phosphate</name>
        <dbReference type="ChEBI" id="CHEBI:58830"/>
    </ligand>
</feature>
<reference key="1">
    <citation type="submission" date="2007-08" db="EMBL/GenBank/DDBJ databases">
        <title>Complete sequence of Shewanella sediminis HAW-EB3.</title>
        <authorList>
            <consortium name="US DOE Joint Genome Institute"/>
            <person name="Copeland A."/>
            <person name="Lucas S."/>
            <person name="Lapidus A."/>
            <person name="Barry K."/>
            <person name="Glavina del Rio T."/>
            <person name="Dalin E."/>
            <person name="Tice H."/>
            <person name="Pitluck S."/>
            <person name="Chertkov O."/>
            <person name="Brettin T."/>
            <person name="Bruce D."/>
            <person name="Detter J.C."/>
            <person name="Han C."/>
            <person name="Schmutz J."/>
            <person name="Larimer F."/>
            <person name="Land M."/>
            <person name="Hauser L."/>
            <person name="Kyrpides N."/>
            <person name="Kim E."/>
            <person name="Zhao J.-S."/>
            <person name="Richardson P."/>
        </authorList>
    </citation>
    <scope>NUCLEOTIDE SEQUENCE [LARGE SCALE GENOMIC DNA]</scope>
    <source>
        <strain>HAW-EB3</strain>
    </source>
</reference>
<accession>A8FSR4</accession>
<dbReference type="EC" id="2.5.1.78" evidence="1"/>
<dbReference type="EMBL" id="CP000821">
    <property type="protein sequence ID" value="ABV35887.1"/>
    <property type="molecule type" value="Genomic_DNA"/>
</dbReference>
<dbReference type="SMR" id="A8FSR4"/>
<dbReference type="STRING" id="425104.Ssed_1276"/>
<dbReference type="KEGG" id="sse:Ssed_1276"/>
<dbReference type="eggNOG" id="COG0054">
    <property type="taxonomic scope" value="Bacteria"/>
</dbReference>
<dbReference type="HOGENOM" id="CLU_089358_1_1_6"/>
<dbReference type="OrthoDB" id="9809709at2"/>
<dbReference type="UniPathway" id="UPA00275">
    <property type="reaction ID" value="UER00404"/>
</dbReference>
<dbReference type="Proteomes" id="UP000002015">
    <property type="component" value="Chromosome"/>
</dbReference>
<dbReference type="GO" id="GO:0005829">
    <property type="term" value="C:cytosol"/>
    <property type="evidence" value="ECO:0007669"/>
    <property type="project" value="TreeGrafter"/>
</dbReference>
<dbReference type="GO" id="GO:0009349">
    <property type="term" value="C:riboflavin synthase complex"/>
    <property type="evidence" value="ECO:0007669"/>
    <property type="project" value="InterPro"/>
</dbReference>
<dbReference type="GO" id="GO:0000906">
    <property type="term" value="F:6,7-dimethyl-8-ribityllumazine synthase activity"/>
    <property type="evidence" value="ECO:0007669"/>
    <property type="project" value="UniProtKB-UniRule"/>
</dbReference>
<dbReference type="GO" id="GO:0009231">
    <property type="term" value="P:riboflavin biosynthetic process"/>
    <property type="evidence" value="ECO:0007669"/>
    <property type="project" value="UniProtKB-UniRule"/>
</dbReference>
<dbReference type="CDD" id="cd09209">
    <property type="entry name" value="Lumazine_synthase-I"/>
    <property type="match status" value="1"/>
</dbReference>
<dbReference type="FunFam" id="3.40.50.960:FF:000001">
    <property type="entry name" value="6,7-dimethyl-8-ribityllumazine synthase"/>
    <property type="match status" value="1"/>
</dbReference>
<dbReference type="Gene3D" id="3.40.50.960">
    <property type="entry name" value="Lumazine/riboflavin synthase"/>
    <property type="match status" value="1"/>
</dbReference>
<dbReference type="HAMAP" id="MF_00178">
    <property type="entry name" value="Lumazine_synth"/>
    <property type="match status" value="1"/>
</dbReference>
<dbReference type="InterPro" id="IPR034964">
    <property type="entry name" value="LS"/>
</dbReference>
<dbReference type="InterPro" id="IPR002180">
    <property type="entry name" value="LS/RS"/>
</dbReference>
<dbReference type="InterPro" id="IPR036467">
    <property type="entry name" value="LS/RS_sf"/>
</dbReference>
<dbReference type="NCBIfam" id="TIGR00114">
    <property type="entry name" value="lumazine-synth"/>
    <property type="match status" value="1"/>
</dbReference>
<dbReference type="NCBIfam" id="NF000812">
    <property type="entry name" value="PRK00061.1-4"/>
    <property type="match status" value="1"/>
</dbReference>
<dbReference type="PANTHER" id="PTHR21058:SF0">
    <property type="entry name" value="6,7-DIMETHYL-8-RIBITYLLUMAZINE SYNTHASE"/>
    <property type="match status" value="1"/>
</dbReference>
<dbReference type="PANTHER" id="PTHR21058">
    <property type="entry name" value="6,7-DIMETHYL-8-RIBITYLLUMAZINE SYNTHASE DMRL SYNTHASE LUMAZINE SYNTHASE"/>
    <property type="match status" value="1"/>
</dbReference>
<dbReference type="Pfam" id="PF00885">
    <property type="entry name" value="DMRL_synthase"/>
    <property type="match status" value="1"/>
</dbReference>
<dbReference type="SUPFAM" id="SSF52121">
    <property type="entry name" value="Lumazine synthase"/>
    <property type="match status" value="1"/>
</dbReference>
<gene>
    <name evidence="1" type="primary">ribH</name>
    <name type="ordered locus">Ssed_1276</name>
</gene>
<sequence length="160" mass="16907">MNVVQGNIESKNAKIAIVVSRFNSFLVESLLEGAVDTLKRFGQVSDENITVVRVPGAVELPLAARRVAASGKFDGIIALGAVIRGGTPHFDFVAGECNKGLAQVALEFDLPVSFGVLTTDTIEQAIERSGTKAGNKGGEAALGLLEMVNVLQELEQQLQD</sequence>